<feature type="chain" id="PRO_0000369713" description="Ribosomal RNA small subunit methyltransferase C">
    <location>
        <begin position="1"/>
        <end position="343"/>
    </location>
</feature>
<comment type="function">
    <text evidence="1">Specifically methylates the guanine in position 1207 of 16S rRNA in the 30S particle.</text>
</comment>
<comment type="catalytic activity">
    <reaction evidence="1">
        <text>guanosine(1207) in 16S rRNA + S-adenosyl-L-methionine = N(2)-methylguanosine(1207) in 16S rRNA + S-adenosyl-L-homocysteine + H(+)</text>
        <dbReference type="Rhea" id="RHEA:42736"/>
        <dbReference type="Rhea" id="RHEA-COMP:10213"/>
        <dbReference type="Rhea" id="RHEA-COMP:10214"/>
        <dbReference type="ChEBI" id="CHEBI:15378"/>
        <dbReference type="ChEBI" id="CHEBI:57856"/>
        <dbReference type="ChEBI" id="CHEBI:59789"/>
        <dbReference type="ChEBI" id="CHEBI:74269"/>
        <dbReference type="ChEBI" id="CHEBI:74481"/>
        <dbReference type="EC" id="2.1.1.172"/>
    </reaction>
</comment>
<comment type="subunit">
    <text evidence="1">Monomer.</text>
</comment>
<comment type="subcellular location">
    <subcellularLocation>
        <location evidence="1">Cytoplasm</location>
    </subcellularLocation>
</comment>
<comment type="similarity">
    <text evidence="1">Belongs to the methyltransferase superfamily. RsmC family.</text>
</comment>
<organism>
    <name type="scientific">Escherichia coli O8 (strain IAI1)</name>
    <dbReference type="NCBI Taxonomy" id="585034"/>
    <lineage>
        <taxon>Bacteria</taxon>
        <taxon>Pseudomonadati</taxon>
        <taxon>Pseudomonadota</taxon>
        <taxon>Gammaproteobacteria</taxon>
        <taxon>Enterobacterales</taxon>
        <taxon>Enterobacteriaceae</taxon>
        <taxon>Escherichia</taxon>
    </lineage>
</organism>
<proteinExistence type="inferred from homology"/>
<gene>
    <name evidence="1" type="primary">rsmC</name>
    <name type="ordered locus">ECIAI1_4593</name>
</gene>
<protein>
    <recommendedName>
        <fullName evidence="1">Ribosomal RNA small subunit methyltransferase C</fullName>
        <ecNumber evidence="1">2.1.1.172</ecNumber>
    </recommendedName>
    <alternativeName>
        <fullName evidence="1">16S rRNA m2G1207 methyltransferase</fullName>
    </alternativeName>
    <alternativeName>
        <fullName evidence="1">rRNA (guanine-N(2)-)-methyltransferase RsmC</fullName>
    </alternativeName>
</protein>
<reference key="1">
    <citation type="journal article" date="2009" name="PLoS Genet.">
        <title>Organised genome dynamics in the Escherichia coli species results in highly diverse adaptive paths.</title>
        <authorList>
            <person name="Touchon M."/>
            <person name="Hoede C."/>
            <person name="Tenaillon O."/>
            <person name="Barbe V."/>
            <person name="Baeriswyl S."/>
            <person name="Bidet P."/>
            <person name="Bingen E."/>
            <person name="Bonacorsi S."/>
            <person name="Bouchier C."/>
            <person name="Bouvet O."/>
            <person name="Calteau A."/>
            <person name="Chiapello H."/>
            <person name="Clermont O."/>
            <person name="Cruveiller S."/>
            <person name="Danchin A."/>
            <person name="Diard M."/>
            <person name="Dossat C."/>
            <person name="Karoui M.E."/>
            <person name="Frapy E."/>
            <person name="Garry L."/>
            <person name="Ghigo J.M."/>
            <person name="Gilles A.M."/>
            <person name="Johnson J."/>
            <person name="Le Bouguenec C."/>
            <person name="Lescat M."/>
            <person name="Mangenot S."/>
            <person name="Martinez-Jehanne V."/>
            <person name="Matic I."/>
            <person name="Nassif X."/>
            <person name="Oztas S."/>
            <person name="Petit M.A."/>
            <person name="Pichon C."/>
            <person name="Rouy Z."/>
            <person name="Ruf C.S."/>
            <person name="Schneider D."/>
            <person name="Tourret J."/>
            <person name="Vacherie B."/>
            <person name="Vallenet D."/>
            <person name="Medigue C."/>
            <person name="Rocha E.P.C."/>
            <person name="Denamur E."/>
        </authorList>
    </citation>
    <scope>NUCLEOTIDE SEQUENCE [LARGE SCALE GENOMIC DNA]</scope>
    <source>
        <strain>IAI1</strain>
    </source>
</reference>
<keyword id="KW-0963">Cytoplasm</keyword>
<keyword id="KW-0489">Methyltransferase</keyword>
<keyword id="KW-0698">rRNA processing</keyword>
<keyword id="KW-0949">S-adenosyl-L-methionine</keyword>
<keyword id="KW-0808">Transferase</keyword>
<dbReference type="EC" id="2.1.1.172" evidence="1"/>
<dbReference type="EMBL" id="CU928160">
    <property type="protein sequence ID" value="CAR01333.1"/>
    <property type="molecule type" value="Genomic_DNA"/>
</dbReference>
<dbReference type="RefSeq" id="WP_001272319.1">
    <property type="nucleotide sequence ID" value="NC_011741.1"/>
</dbReference>
<dbReference type="SMR" id="B7LXT2"/>
<dbReference type="KEGG" id="ecr:ECIAI1_4593"/>
<dbReference type="HOGENOM" id="CLU_049581_0_1_6"/>
<dbReference type="GO" id="GO:0005737">
    <property type="term" value="C:cytoplasm"/>
    <property type="evidence" value="ECO:0007669"/>
    <property type="project" value="UniProtKB-SubCell"/>
</dbReference>
<dbReference type="GO" id="GO:0052914">
    <property type="term" value="F:16S rRNA (guanine(1207)-N(2))-methyltransferase activity"/>
    <property type="evidence" value="ECO:0007669"/>
    <property type="project" value="UniProtKB-EC"/>
</dbReference>
<dbReference type="GO" id="GO:0003676">
    <property type="term" value="F:nucleic acid binding"/>
    <property type="evidence" value="ECO:0007669"/>
    <property type="project" value="InterPro"/>
</dbReference>
<dbReference type="CDD" id="cd02440">
    <property type="entry name" value="AdoMet_MTases"/>
    <property type="match status" value="1"/>
</dbReference>
<dbReference type="FunFam" id="3.40.50.150:FF:000058">
    <property type="entry name" value="Ribosomal RNA small subunit methyltransferase C"/>
    <property type="match status" value="1"/>
</dbReference>
<dbReference type="FunFam" id="3.40.50.150:FF:000063">
    <property type="entry name" value="Ribosomal RNA small subunit methyltransferase C"/>
    <property type="match status" value="1"/>
</dbReference>
<dbReference type="Gene3D" id="3.40.50.150">
    <property type="entry name" value="Vaccinia Virus protein VP39"/>
    <property type="match status" value="2"/>
</dbReference>
<dbReference type="HAMAP" id="MF_01862">
    <property type="entry name" value="16SrRNA_methyltr_C"/>
    <property type="match status" value="1"/>
</dbReference>
<dbReference type="InterPro" id="IPR002052">
    <property type="entry name" value="DNA_methylase_N6_adenine_CS"/>
</dbReference>
<dbReference type="InterPro" id="IPR013675">
    <property type="entry name" value="Mtase_sm_N"/>
</dbReference>
<dbReference type="InterPro" id="IPR023543">
    <property type="entry name" value="rRNA_ssu_MeTfrase_C"/>
</dbReference>
<dbReference type="InterPro" id="IPR046977">
    <property type="entry name" value="RsmC/RlmG"/>
</dbReference>
<dbReference type="InterPro" id="IPR029063">
    <property type="entry name" value="SAM-dependent_MTases_sf"/>
</dbReference>
<dbReference type="InterPro" id="IPR007848">
    <property type="entry name" value="Small_mtfrase_dom"/>
</dbReference>
<dbReference type="NCBIfam" id="NF007023">
    <property type="entry name" value="PRK09489.1"/>
    <property type="match status" value="1"/>
</dbReference>
<dbReference type="PANTHER" id="PTHR47816">
    <property type="entry name" value="RIBOSOMAL RNA SMALL SUBUNIT METHYLTRANSFERASE C"/>
    <property type="match status" value="1"/>
</dbReference>
<dbReference type="PANTHER" id="PTHR47816:SF4">
    <property type="entry name" value="RIBOSOMAL RNA SMALL SUBUNIT METHYLTRANSFERASE C"/>
    <property type="match status" value="1"/>
</dbReference>
<dbReference type="Pfam" id="PF05175">
    <property type="entry name" value="MTS"/>
    <property type="match status" value="1"/>
</dbReference>
<dbReference type="Pfam" id="PF08468">
    <property type="entry name" value="MTS_N"/>
    <property type="match status" value="1"/>
</dbReference>
<dbReference type="SUPFAM" id="SSF53335">
    <property type="entry name" value="S-adenosyl-L-methionine-dependent methyltransferases"/>
    <property type="match status" value="1"/>
</dbReference>
<evidence type="ECO:0000255" key="1">
    <source>
        <dbReference type="HAMAP-Rule" id="MF_01862"/>
    </source>
</evidence>
<name>RSMC_ECO8A</name>
<sequence length="343" mass="37657">MSAFTPASEVLLRHSDDFEQSRILFAGDLQDDLPARLDTAASRAHTQQFHHWQVLSRQMGDNARFSLVATADDVADCDTLIYYWPKNKPEAQFQLMNLLSLLPVGTDIFVVGENRSGVRSAEQMLADYAPLNKVDSARRCGLYFGRLEKQPVFDADKFWGEYSVDGLTVKTLPGVFSRDGLDVGSQLLLSTLTPHTKGKVLDVGCGAGVLSVAFARHSPKIRLTLCDVSAPAVEASRATLAANCVEGEVFASNVFSEVKGRFDMIISNPPFHDGMQTSLDAAQTLIRGAVRHLNSGGELRIVANAFLPYPDVLDETFGFHEVIAQTGRFKVYRAIMTRQAKKG</sequence>
<accession>B7LXT2</accession>